<protein>
    <recommendedName>
        <fullName evidence="1">Methylglyoxal synthase</fullName>
        <shortName evidence="1">MGS</shortName>
        <ecNumber evidence="1">4.2.3.3</ecNumber>
    </recommendedName>
</protein>
<accession>B0UW70</accession>
<organism>
    <name type="scientific">Histophilus somni (strain 2336)</name>
    <name type="common">Haemophilus somnus</name>
    <dbReference type="NCBI Taxonomy" id="228400"/>
    <lineage>
        <taxon>Bacteria</taxon>
        <taxon>Pseudomonadati</taxon>
        <taxon>Pseudomonadota</taxon>
        <taxon>Gammaproteobacteria</taxon>
        <taxon>Pasteurellales</taxon>
        <taxon>Pasteurellaceae</taxon>
        <taxon>Histophilus</taxon>
    </lineage>
</organism>
<keyword id="KW-0456">Lyase</keyword>
<dbReference type="EC" id="4.2.3.3" evidence="1"/>
<dbReference type="EMBL" id="CP000947">
    <property type="protein sequence ID" value="ACA31893.1"/>
    <property type="molecule type" value="Genomic_DNA"/>
</dbReference>
<dbReference type="RefSeq" id="WP_012341132.1">
    <property type="nucleotide sequence ID" value="NC_010519.1"/>
</dbReference>
<dbReference type="SMR" id="B0UW70"/>
<dbReference type="STRING" id="228400.HSM_0265"/>
<dbReference type="GeneID" id="31486545"/>
<dbReference type="KEGG" id="hsm:HSM_0265"/>
<dbReference type="HOGENOM" id="CLU_120420_0_1_6"/>
<dbReference type="GO" id="GO:0005829">
    <property type="term" value="C:cytosol"/>
    <property type="evidence" value="ECO:0007669"/>
    <property type="project" value="TreeGrafter"/>
</dbReference>
<dbReference type="GO" id="GO:0008929">
    <property type="term" value="F:methylglyoxal synthase activity"/>
    <property type="evidence" value="ECO:0007669"/>
    <property type="project" value="UniProtKB-UniRule"/>
</dbReference>
<dbReference type="GO" id="GO:0019242">
    <property type="term" value="P:methylglyoxal biosynthetic process"/>
    <property type="evidence" value="ECO:0007669"/>
    <property type="project" value="UniProtKB-UniRule"/>
</dbReference>
<dbReference type="CDD" id="cd01422">
    <property type="entry name" value="MGS"/>
    <property type="match status" value="1"/>
</dbReference>
<dbReference type="FunFam" id="3.40.50.1380:FF:000002">
    <property type="entry name" value="Methylglyoxal synthase"/>
    <property type="match status" value="1"/>
</dbReference>
<dbReference type="Gene3D" id="3.40.50.1380">
    <property type="entry name" value="Methylglyoxal synthase-like domain"/>
    <property type="match status" value="1"/>
</dbReference>
<dbReference type="HAMAP" id="MF_00549">
    <property type="entry name" value="Methylglyoxal_synth"/>
    <property type="match status" value="1"/>
</dbReference>
<dbReference type="InterPro" id="IPR004363">
    <property type="entry name" value="Methylgl_synth"/>
</dbReference>
<dbReference type="InterPro" id="IPR018148">
    <property type="entry name" value="Methylglyoxal_synth_AS"/>
</dbReference>
<dbReference type="InterPro" id="IPR011607">
    <property type="entry name" value="MGS-like_dom"/>
</dbReference>
<dbReference type="InterPro" id="IPR036914">
    <property type="entry name" value="MGS-like_dom_sf"/>
</dbReference>
<dbReference type="NCBIfam" id="TIGR00160">
    <property type="entry name" value="MGSA"/>
    <property type="match status" value="1"/>
</dbReference>
<dbReference type="NCBIfam" id="NF003559">
    <property type="entry name" value="PRK05234.1"/>
    <property type="match status" value="1"/>
</dbReference>
<dbReference type="PANTHER" id="PTHR30492">
    <property type="entry name" value="METHYLGLYOXAL SYNTHASE"/>
    <property type="match status" value="1"/>
</dbReference>
<dbReference type="PANTHER" id="PTHR30492:SF0">
    <property type="entry name" value="METHYLGLYOXAL SYNTHASE"/>
    <property type="match status" value="1"/>
</dbReference>
<dbReference type="Pfam" id="PF02142">
    <property type="entry name" value="MGS"/>
    <property type="match status" value="1"/>
</dbReference>
<dbReference type="PIRSF" id="PIRSF006614">
    <property type="entry name" value="Methylglyox_syn"/>
    <property type="match status" value="1"/>
</dbReference>
<dbReference type="SMART" id="SM00851">
    <property type="entry name" value="MGS"/>
    <property type="match status" value="1"/>
</dbReference>
<dbReference type="SUPFAM" id="SSF52335">
    <property type="entry name" value="Methylglyoxal synthase-like"/>
    <property type="match status" value="1"/>
</dbReference>
<dbReference type="PROSITE" id="PS01335">
    <property type="entry name" value="METHYLGLYOXAL_SYNTH"/>
    <property type="match status" value="1"/>
</dbReference>
<dbReference type="PROSITE" id="PS51855">
    <property type="entry name" value="MGS"/>
    <property type="match status" value="1"/>
</dbReference>
<name>MGSA_HISS2</name>
<gene>
    <name evidence="1" type="primary">mgsA</name>
    <name type="ordered locus">HSM_0265</name>
</gene>
<proteinExistence type="inferred from homology"/>
<evidence type="ECO:0000255" key="1">
    <source>
        <dbReference type="HAMAP-Rule" id="MF_00549"/>
    </source>
</evidence>
<sequence>MQTTYRKLAKNKKIALVAHDHCKQDLIQWCQTNRTLLQPHILYATGTTGNLIHQETNLEIKNLLSGPMGGDQQLGGLIAEGKIDLLIFFWDPMNAVPHDPDVKALMRIATVWNIPVAMNIATADFLISSPAFQQETEIRIPDYQGYLKERLK</sequence>
<feature type="chain" id="PRO_1000081956" description="Methylglyoxal synthase">
    <location>
        <begin position="1"/>
        <end position="152"/>
    </location>
</feature>
<feature type="domain" description="MGS-like" evidence="1">
    <location>
        <begin position="6"/>
        <end position="152"/>
    </location>
</feature>
<feature type="active site" description="Proton donor/acceptor" evidence="1">
    <location>
        <position position="71"/>
    </location>
</feature>
<feature type="binding site" evidence="1">
    <location>
        <position position="19"/>
    </location>
    <ligand>
        <name>substrate</name>
    </ligand>
</feature>
<feature type="binding site" evidence="1">
    <location>
        <position position="23"/>
    </location>
    <ligand>
        <name>substrate</name>
    </ligand>
</feature>
<feature type="binding site" evidence="1">
    <location>
        <begin position="45"/>
        <end position="48"/>
    </location>
    <ligand>
        <name>substrate</name>
    </ligand>
</feature>
<feature type="binding site" evidence="1">
    <location>
        <begin position="65"/>
        <end position="66"/>
    </location>
    <ligand>
        <name>substrate</name>
    </ligand>
</feature>
<feature type="binding site" evidence="1">
    <location>
        <position position="98"/>
    </location>
    <ligand>
        <name>substrate</name>
    </ligand>
</feature>
<comment type="function">
    <text evidence="1">Catalyzes the formation of methylglyoxal from dihydroxyacetone phosphate.</text>
</comment>
<comment type="catalytic activity">
    <reaction evidence="1">
        <text>dihydroxyacetone phosphate = methylglyoxal + phosphate</text>
        <dbReference type="Rhea" id="RHEA:17937"/>
        <dbReference type="ChEBI" id="CHEBI:17158"/>
        <dbReference type="ChEBI" id="CHEBI:43474"/>
        <dbReference type="ChEBI" id="CHEBI:57642"/>
        <dbReference type="EC" id="4.2.3.3"/>
    </reaction>
</comment>
<comment type="similarity">
    <text evidence="1">Belongs to the methylglyoxal synthase family.</text>
</comment>
<reference key="1">
    <citation type="submission" date="2008-02" db="EMBL/GenBank/DDBJ databases">
        <title>Complete sequence of Haemophilus somnus 2336.</title>
        <authorList>
            <consortium name="US DOE Joint Genome Institute"/>
            <person name="Siddaramappa S."/>
            <person name="Duncan A.J."/>
            <person name="Challacombe J.F."/>
            <person name="Rainey D."/>
            <person name="Gillaspy A.F."/>
            <person name="Carson M."/>
            <person name="Gipson J."/>
            <person name="Gipson M."/>
            <person name="Bruce D."/>
            <person name="Detter J.C."/>
            <person name="Han C.S."/>
            <person name="Land M."/>
            <person name="Tapia R."/>
            <person name="Thompson L.S."/>
            <person name="Orvis J."/>
            <person name="Zaitshik J."/>
            <person name="Barnes G."/>
            <person name="Brettin T.S."/>
            <person name="Dyer D.W."/>
            <person name="Inzana T.J."/>
        </authorList>
    </citation>
    <scope>NUCLEOTIDE SEQUENCE [LARGE SCALE GENOMIC DNA]</scope>
    <source>
        <strain>2336</strain>
    </source>
</reference>